<comment type="function">
    <text evidence="1">This protein binds to the 23S rRNA, and is important in its secondary structure. It is located near the subunit interface in the base of the L7/L12 stalk, and near the tRNA binding site of the peptidyltransferase center.</text>
</comment>
<comment type="subunit">
    <text evidence="1">Part of the 50S ribosomal subunit.</text>
</comment>
<comment type="similarity">
    <text evidence="1">Belongs to the universal ribosomal protein uL6 family.</text>
</comment>
<evidence type="ECO:0000255" key="1">
    <source>
        <dbReference type="HAMAP-Rule" id="MF_01365"/>
    </source>
</evidence>
<evidence type="ECO:0000305" key="2"/>
<name>RL6_HELPH</name>
<gene>
    <name evidence="1" type="primary">rplF</name>
    <name type="ordered locus">HPAG1_1249</name>
</gene>
<feature type="chain" id="PRO_0000265259" description="Large ribosomal subunit protein uL6">
    <location>
        <begin position="1"/>
        <end position="178"/>
    </location>
</feature>
<keyword id="KW-0687">Ribonucleoprotein</keyword>
<keyword id="KW-0689">Ribosomal protein</keyword>
<keyword id="KW-0694">RNA-binding</keyword>
<keyword id="KW-0699">rRNA-binding</keyword>
<reference key="1">
    <citation type="journal article" date="2006" name="Proc. Natl. Acad. Sci. U.S.A.">
        <title>The complete genome sequence of a chronic atrophic gastritis Helicobacter pylori strain: evolution during disease progression.</title>
        <authorList>
            <person name="Oh J.D."/>
            <person name="Kling-Baeckhed H."/>
            <person name="Giannakis M."/>
            <person name="Xu J."/>
            <person name="Fulton R.S."/>
            <person name="Fulton L.A."/>
            <person name="Cordum H.S."/>
            <person name="Wang C."/>
            <person name="Elliott G."/>
            <person name="Edwards J."/>
            <person name="Mardis E.R."/>
            <person name="Engstrand L.G."/>
            <person name="Gordon J.I."/>
        </authorList>
    </citation>
    <scope>NUCLEOTIDE SEQUENCE [LARGE SCALE GENOMIC DNA]</scope>
    <source>
        <strain>HPAG1</strain>
    </source>
</reference>
<sequence length="178" mass="19468">MSRIGKRIIEIPSSVQASVEGSKLLFKNGKEKHELETHNRVKITLENNQLSFQPVGEDAQSRAYWGTYGALANNIVIGLSTGFSKILEVNGVGYKVALGNKTLDLSLGFSHPVKYPIPAGIEMVVEKNTITIKGSDKQKVGQVAAEIRSFRPPEPYKGKGVKYSDEVIIRKAGKTAKK</sequence>
<dbReference type="EMBL" id="CP000241">
    <property type="protein sequence ID" value="ABF85316.1"/>
    <property type="molecule type" value="Genomic_DNA"/>
</dbReference>
<dbReference type="RefSeq" id="WP_000086561.1">
    <property type="nucleotide sequence ID" value="NC_008086.1"/>
</dbReference>
<dbReference type="SMR" id="Q1CRV6"/>
<dbReference type="KEGG" id="hpa:HPAG1_1249"/>
<dbReference type="HOGENOM" id="CLU_065464_1_2_7"/>
<dbReference type="GO" id="GO:0022625">
    <property type="term" value="C:cytosolic large ribosomal subunit"/>
    <property type="evidence" value="ECO:0007669"/>
    <property type="project" value="TreeGrafter"/>
</dbReference>
<dbReference type="GO" id="GO:0019843">
    <property type="term" value="F:rRNA binding"/>
    <property type="evidence" value="ECO:0007669"/>
    <property type="project" value="UniProtKB-UniRule"/>
</dbReference>
<dbReference type="GO" id="GO:0003735">
    <property type="term" value="F:structural constituent of ribosome"/>
    <property type="evidence" value="ECO:0007669"/>
    <property type="project" value="InterPro"/>
</dbReference>
<dbReference type="GO" id="GO:0002181">
    <property type="term" value="P:cytoplasmic translation"/>
    <property type="evidence" value="ECO:0007669"/>
    <property type="project" value="TreeGrafter"/>
</dbReference>
<dbReference type="FunFam" id="3.90.930.12:FF:000001">
    <property type="entry name" value="50S ribosomal protein L6"/>
    <property type="match status" value="1"/>
</dbReference>
<dbReference type="Gene3D" id="3.90.930.12">
    <property type="entry name" value="Ribosomal protein L6, alpha-beta domain"/>
    <property type="match status" value="2"/>
</dbReference>
<dbReference type="HAMAP" id="MF_01365_B">
    <property type="entry name" value="Ribosomal_uL6_B"/>
    <property type="match status" value="1"/>
</dbReference>
<dbReference type="InterPro" id="IPR000702">
    <property type="entry name" value="Ribosomal_uL6-like"/>
</dbReference>
<dbReference type="InterPro" id="IPR036789">
    <property type="entry name" value="Ribosomal_uL6-like_a/b-dom_sf"/>
</dbReference>
<dbReference type="InterPro" id="IPR020040">
    <property type="entry name" value="Ribosomal_uL6_a/b-dom"/>
</dbReference>
<dbReference type="InterPro" id="IPR019906">
    <property type="entry name" value="Ribosomal_uL6_bac-type"/>
</dbReference>
<dbReference type="InterPro" id="IPR002358">
    <property type="entry name" value="Ribosomal_uL6_CS"/>
</dbReference>
<dbReference type="NCBIfam" id="TIGR03654">
    <property type="entry name" value="L6_bact"/>
    <property type="match status" value="1"/>
</dbReference>
<dbReference type="PANTHER" id="PTHR11655">
    <property type="entry name" value="60S/50S RIBOSOMAL PROTEIN L6/L9"/>
    <property type="match status" value="1"/>
</dbReference>
<dbReference type="PANTHER" id="PTHR11655:SF14">
    <property type="entry name" value="LARGE RIBOSOMAL SUBUNIT PROTEIN UL6M"/>
    <property type="match status" value="1"/>
</dbReference>
<dbReference type="Pfam" id="PF00347">
    <property type="entry name" value="Ribosomal_L6"/>
    <property type="match status" value="1"/>
</dbReference>
<dbReference type="PIRSF" id="PIRSF002162">
    <property type="entry name" value="Ribosomal_L6"/>
    <property type="match status" value="1"/>
</dbReference>
<dbReference type="PRINTS" id="PR00059">
    <property type="entry name" value="RIBOSOMALL6"/>
</dbReference>
<dbReference type="SUPFAM" id="SSF56053">
    <property type="entry name" value="Ribosomal protein L6"/>
    <property type="match status" value="2"/>
</dbReference>
<dbReference type="PROSITE" id="PS00525">
    <property type="entry name" value="RIBOSOMAL_L6_1"/>
    <property type="match status" value="1"/>
</dbReference>
<accession>Q1CRV6</accession>
<protein>
    <recommendedName>
        <fullName evidence="1">Large ribosomal subunit protein uL6</fullName>
    </recommendedName>
    <alternativeName>
        <fullName evidence="2">50S ribosomal protein L6</fullName>
    </alternativeName>
</protein>
<organism>
    <name type="scientific">Helicobacter pylori (strain HPAG1)</name>
    <dbReference type="NCBI Taxonomy" id="357544"/>
    <lineage>
        <taxon>Bacteria</taxon>
        <taxon>Pseudomonadati</taxon>
        <taxon>Campylobacterota</taxon>
        <taxon>Epsilonproteobacteria</taxon>
        <taxon>Campylobacterales</taxon>
        <taxon>Helicobacteraceae</taxon>
        <taxon>Helicobacter</taxon>
    </lineage>
</organism>
<proteinExistence type="inferred from homology"/>